<name>T2FA_MOUSE</name>
<gene>
    <name type="primary">Gtf2f1</name>
</gene>
<evidence type="ECO:0000250" key="1"/>
<evidence type="ECO:0000250" key="2">
    <source>
        <dbReference type="UniProtKB" id="P35269"/>
    </source>
</evidence>
<evidence type="ECO:0000256" key="3">
    <source>
        <dbReference type="SAM" id="MobiDB-lite"/>
    </source>
</evidence>
<evidence type="ECO:0000305" key="4"/>
<evidence type="ECO:0007744" key="5">
    <source>
    </source>
</evidence>
<evidence type="ECO:0007744" key="6">
    <source>
    </source>
</evidence>
<evidence type="ECO:0007744" key="7">
    <source>
    </source>
</evidence>
<feature type="initiator methionine" description="Removed" evidence="2">
    <location>
        <position position="1"/>
    </location>
</feature>
<feature type="chain" id="PRO_0000260322" description="General transcription factor IIF subunit 1">
    <location>
        <begin position="2"/>
        <end position="508"/>
    </location>
</feature>
<feature type="region of interest" description="Disordered" evidence="3">
    <location>
        <begin position="177"/>
        <end position="446"/>
    </location>
</feature>
<feature type="compositionally biased region" description="Basic residues" evidence="3">
    <location>
        <begin position="232"/>
        <end position="251"/>
    </location>
</feature>
<feature type="compositionally biased region" description="Acidic residues" evidence="3">
    <location>
        <begin position="255"/>
        <end position="270"/>
    </location>
</feature>
<feature type="compositionally biased region" description="Acidic residues" evidence="3">
    <location>
        <begin position="303"/>
        <end position="325"/>
    </location>
</feature>
<feature type="compositionally biased region" description="Acidic residues" evidence="3">
    <location>
        <begin position="343"/>
        <end position="355"/>
    </location>
</feature>
<feature type="compositionally biased region" description="Basic residues" evidence="3">
    <location>
        <begin position="364"/>
        <end position="374"/>
    </location>
</feature>
<feature type="compositionally biased region" description="Polar residues" evidence="3">
    <location>
        <begin position="378"/>
        <end position="388"/>
    </location>
</feature>
<feature type="compositionally biased region" description="Low complexity" evidence="3">
    <location>
        <begin position="389"/>
        <end position="406"/>
    </location>
</feature>
<feature type="compositionally biased region" description="Polar residues" evidence="3">
    <location>
        <begin position="428"/>
        <end position="443"/>
    </location>
</feature>
<feature type="modified residue" description="N-acetylalanine" evidence="2">
    <location>
        <position position="2"/>
    </location>
</feature>
<feature type="modified residue" description="Phosphothreonine" evidence="2">
    <location>
        <position position="156"/>
    </location>
</feature>
<feature type="modified residue" description="Phosphoserine" evidence="6">
    <location>
        <position position="217"/>
    </location>
</feature>
<feature type="modified residue" description="Phosphoserine" evidence="6">
    <location>
        <position position="218"/>
    </location>
</feature>
<feature type="modified residue" description="Phosphoserine" evidence="5 6">
    <location>
        <position position="221"/>
    </location>
</feature>
<feature type="modified residue" description="Phosphoserine" evidence="5 6">
    <location>
        <position position="224"/>
    </location>
</feature>
<feature type="modified residue" description="Phosphothreonine" evidence="2">
    <location>
        <position position="331"/>
    </location>
</feature>
<feature type="modified residue" description="Phosphoserine" evidence="2">
    <location>
        <position position="377"/>
    </location>
</feature>
<feature type="modified residue" description="Phosphoserine" evidence="2">
    <location>
        <position position="380"/>
    </location>
</feature>
<feature type="modified residue" description="Phosphoserine" evidence="2">
    <location>
        <position position="381"/>
    </location>
</feature>
<feature type="modified residue" description="Phosphoserine" evidence="2">
    <location>
        <position position="385"/>
    </location>
</feature>
<feature type="modified residue" description="Phosphothreonine" evidence="6">
    <location>
        <position position="389"/>
    </location>
</feature>
<feature type="modified residue" description="Phosphoserine" evidence="2">
    <location>
        <position position="391"/>
    </location>
</feature>
<feature type="modified residue" description="N6-acetyllysine" evidence="7">
    <location>
        <position position="407"/>
    </location>
</feature>
<feature type="modified residue" description="Phosphoserine" evidence="2">
    <location>
        <position position="431"/>
    </location>
</feature>
<feature type="modified residue" description="Phosphoserine" evidence="6">
    <location>
        <position position="433"/>
    </location>
</feature>
<feature type="modified residue" description="Phosphoserine" evidence="2">
    <location>
        <position position="436"/>
    </location>
</feature>
<feature type="modified residue" description="Phosphothreonine" evidence="2">
    <location>
        <position position="437"/>
    </location>
</feature>
<feature type="modified residue" description="Phosphoserine" evidence="2">
    <location>
        <position position="440"/>
    </location>
</feature>
<feature type="sequence conflict" description="In Ref. 1; BAE40186/BAE40193." evidence="4" ref="1">
    <original>P</original>
    <variation>T</variation>
    <location>
        <position position="139"/>
    </location>
</feature>
<feature type="sequence conflict" description="In Ref. 1; BAE40186/BAE40193." evidence="4" ref="1">
    <original>Q</original>
    <variation>E</variation>
    <location>
        <position position="185"/>
    </location>
</feature>
<protein>
    <recommendedName>
        <fullName>General transcription factor IIF subunit 1</fullName>
    </recommendedName>
    <alternativeName>
        <fullName>Transcription initiation factor IIF subunit alpha</fullName>
        <shortName>TFIIF-alpha</shortName>
    </alternativeName>
</protein>
<dbReference type="EMBL" id="AK168236">
    <property type="protein sequence ID" value="BAE40186.1"/>
    <property type="molecule type" value="mRNA"/>
</dbReference>
<dbReference type="EMBL" id="AK168243">
    <property type="protein sequence ID" value="BAE40193.1"/>
    <property type="molecule type" value="mRNA"/>
</dbReference>
<dbReference type="EMBL" id="CH466537">
    <property type="protein sequence ID" value="EDL38221.1"/>
    <property type="molecule type" value="Genomic_DNA"/>
</dbReference>
<dbReference type="EMBL" id="BC023081">
    <property type="protein sequence ID" value="AAH23081.1"/>
    <property type="molecule type" value="mRNA"/>
</dbReference>
<dbReference type="EMBL" id="BC031123">
    <property type="protein sequence ID" value="AAH31123.1"/>
    <property type="molecule type" value="mRNA"/>
</dbReference>
<dbReference type="CCDS" id="CCDS37667.1"/>
<dbReference type="RefSeq" id="NP_598562.1">
    <property type="nucleotide sequence ID" value="NM_133801.3"/>
</dbReference>
<dbReference type="SMR" id="Q3THK3"/>
<dbReference type="BioGRID" id="220965">
    <property type="interactions" value="32"/>
</dbReference>
<dbReference type="ComplexPortal" id="CPX-83">
    <property type="entry name" value="General transcription factor TFIIF complex"/>
</dbReference>
<dbReference type="CORUM" id="Q3THK3"/>
<dbReference type="FunCoup" id="Q3THK3">
    <property type="interactions" value="2639"/>
</dbReference>
<dbReference type="IntAct" id="Q3THK3">
    <property type="interactions" value="1"/>
</dbReference>
<dbReference type="STRING" id="10090.ENSMUSP00000002733"/>
<dbReference type="GlyGen" id="Q3THK3">
    <property type="glycosylation" value="1 site"/>
</dbReference>
<dbReference type="iPTMnet" id="Q3THK3"/>
<dbReference type="PhosphoSitePlus" id="Q3THK3"/>
<dbReference type="jPOST" id="Q3THK3"/>
<dbReference type="PaxDb" id="10090-ENSMUSP00000002733"/>
<dbReference type="PeptideAtlas" id="Q3THK3"/>
<dbReference type="ProteomicsDB" id="263053"/>
<dbReference type="Pumba" id="Q3THK3"/>
<dbReference type="Antibodypedia" id="11855">
    <property type="antibodies" value="306 antibodies from 27 providers"/>
</dbReference>
<dbReference type="DNASU" id="98053"/>
<dbReference type="Ensembl" id="ENSMUST00000002733.7">
    <property type="protein sequence ID" value="ENSMUSP00000002733.7"/>
    <property type="gene ID" value="ENSMUSG00000002658.10"/>
</dbReference>
<dbReference type="GeneID" id="98053"/>
<dbReference type="KEGG" id="mmu:98053"/>
<dbReference type="UCSC" id="uc008ddp.1">
    <property type="organism name" value="mouse"/>
</dbReference>
<dbReference type="AGR" id="MGI:1923848"/>
<dbReference type="CTD" id="2962"/>
<dbReference type="MGI" id="MGI:1923848">
    <property type="gene designation" value="Gtf2f1"/>
</dbReference>
<dbReference type="VEuPathDB" id="HostDB:ENSMUSG00000002658"/>
<dbReference type="eggNOG" id="KOG2393">
    <property type="taxonomic scope" value="Eukaryota"/>
</dbReference>
<dbReference type="GeneTree" id="ENSGT00440000038032"/>
<dbReference type="HOGENOM" id="CLU_027572_2_0_1"/>
<dbReference type="InParanoid" id="Q3THK3"/>
<dbReference type="OMA" id="VTCGKTM"/>
<dbReference type="OrthoDB" id="76676at2759"/>
<dbReference type="PhylomeDB" id="Q3THK3"/>
<dbReference type="TreeFam" id="TF313850"/>
<dbReference type="Reactome" id="R-MMU-112382">
    <property type="pathway name" value="Formation of RNA Pol II elongation complex"/>
</dbReference>
<dbReference type="Reactome" id="R-MMU-113418">
    <property type="pathway name" value="Formation of the Early Elongation Complex"/>
</dbReference>
<dbReference type="Reactome" id="R-MMU-674695">
    <property type="pathway name" value="RNA Polymerase II Pre-transcription Events"/>
</dbReference>
<dbReference type="Reactome" id="R-MMU-6796648">
    <property type="pathway name" value="TP53 Regulates Transcription of DNA Repair Genes"/>
</dbReference>
<dbReference type="Reactome" id="R-MMU-6803529">
    <property type="pathway name" value="FGFR2 alternative splicing"/>
</dbReference>
<dbReference type="Reactome" id="R-MMU-6807505">
    <property type="pathway name" value="RNA polymerase II transcribes snRNA genes"/>
</dbReference>
<dbReference type="Reactome" id="R-MMU-72086">
    <property type="pathway name" value="mRNA Capping"/>
</dbReference>
<dbReference type="Reactome" id="R-MMU-72163">
    <property type="pathway name" value="mRNA Splicing - Major Pathway"/>
</dbReference>
<dbReference type="Reactome" id="R-MMU-72165">
    <property type="pathway name" value="mRNA Splicing - Minor Pathway"/>
</dbReference>
<dbReference type="Reactome" id="R-MMU-72203">
    <property type="pathway name" value="Processing of Capped Intron-Containing Pre-mRNA"/>
</dbReference>
<dbReference type="Reactome" id="R-MMU-73776">
    <property type="pathway name" value="RNA Polymerase II Promoter Escape"/>
</dbReference>
<dbReference type="Reactome" id="R-MMU-73779">
    <property type="pathway name" value="RNA Polymerase II Transcription Pre-Initiation And Promoter Opening"/>
</dbReference>
<dbReference type="Reactome" id="R-MMU-75953">
    <property type="pathway name" value="RNA Polymerase II Transcription Initiation"/>
</dbReference>
<dbReference type="Reactome" id="R-MMU-75955">
    <property type="pathway name" value="RNA Polymerase II Transcription Elongation"/>
</dbReference>
<dbReference type="Reactome" id="R-MMU-76042">
    <property type="pathway name" value="RNA Polymerase II Transcription Initiation And Promoter Clearance"/>
</dbReference>
<dbReference type="Reactome" id="R-MMU-77075">
    <property type="pathway name" value="RNA Pol II CTD phosphorylation and interaction with CE"/>
</dbReference>
<dbReference type="Reactome" id="R-MMU-9018519">
    <property type="pathway name" value="Estrogen-dependent gene expression"/>
</dbReference>
<dbReference type="BioGRID-ORCS" id="98053">
    <property type="hits" value="19 hits in 82 CRISPR screens"/>
</dbReference>
<dbReference type="PRO" id="PR:Q3THK3"/>
<dbReference type="Proteomes" id="UP000000589">
    <property type="component" value="Chromosome 17"/>
</dbReference>
<dbReference type="RNAct" id="Q3THK3">
    <property type="molecule type" value="protein"/>
</dbReference>
<dbReference type="Bgee" id="ENSMUSG00000002658">
    <property type="expression patterns" value="Expressed in saccule of membranous labyrinth and 283 other cell types or tissues"/>
</dbReference>
<dbReference type="GO" id="GO:0030054">
    <property type="term" value="C:cell junction"/>
    <property type="evidence" value="ECO:0007669"/>
    <property type="project" value="Ensembl"/>
</dbReference>
<dbReference type="GO" id="GO:0005669">
    <property type="term" value="C:transcription factor TFIID complex"/>
    <property type="evidence" value="ECO:0007669"/>
    <property type="project" value="Ensembl"/>
</dbReference>
<dbReference type="GO" id="GO:0005674">
    <property type="term" value="C:transcription factor TFIIF complex"/>
    <property type="evidence" value="ECO:0000266"/>
    <property type="project" value="ComplexPortal"/>
</dbReference>
<dbReference type="GO" id="GO:0003677">
    <property type="term" value="F:DNA binding"/>
    <property type="evidence" value="ECO:0007669"/>
    <property type="project" value="UniProtKB-KW"/>
</dbReference>
<dbReference type="GO" id="GO:0019211">
    <property type="term" value="F:phosphatase activator activity"/>
    <property type="evidence" value="ECO:0007669"/>
    <property type="project" value="Ensembl"/>
</dbReference>
<dbReference type="GO" id="GO:1990841">
    <property type="term" value="F:promoter-specific chromatin binding"/>
    <property type="evidence" value="ECO:0000250"/>
    <property type="project" value="UniProtKB"/>
</dbReference>
<dbReference type="GO" id="GO:0019904">
    <property type="term" value="F:protein domain specific binding"/>
    <property type="evidence" value="ECO:0007669"/>
    <property type="project" value="Ensembl"/>
</dbReference>
<dbReference type="GO" id="GO:0019903">
    <property type="term" value="F:protein phosphatase binding"/>
    <property type="evidence" value="ECO:0007669"/>
    <property type="project" value="Ensembl"/>
</dbReference>
<dbReference type="GO" id="GO:0016251">
    <property type="term" value="F:RNA polymerase II general transcription initiation factor activity"/>
    <property type="evidence" value="ECO:0007669"/>
    <property type="project" value="Ensembl"/>
</dbReference>
<dbReference type="GO" id="GO:0001091">
    <property type="term" value="F:RNA polymerase II general transcription initiation factor binding"/>
    <property type="evidence" value="ECO:0007669"/>
    <property type="project" value="Ensembl"/>
</dbReference>
<dbReference type="GO" id="GO:0032091">
    <property type="term" value="P:negative regulation of protein binding"/>
    <property type="evidence" value="ECO:0000250"/>
    <property type="project" value="UniProtKB"/>
</dbReference>
<dbReference type="GO" id="GO:0045944">
    <property type="term" value="P:positive regulation of transcription by RNA polymerase II"/>
    <property type="evidence" value="ECO:0000314"/>
    <property type="project" value="MGI"/>
</dbReference>
<dbReference type="GO" id="GO:0032968">
    <property type="term" value="P:positive regulation of transcription elongation by RNA polymerase II"/>
    <property type="evidence" value="ECO:0007669"/>
    <property type="project" value="InterPro"/>
</dbReference>
<dbReference type="GO" id="GO:0009615">
    <property type="term" value="P:response to virus"/>
    <property type="evidence" value="ECO:0007669"/>
    <property type="project" value="Ensembl"/>
</dbReference>
<dbReference type="GO" id="GO:0006368">
    <property type="term" value="P:transcription elongation by RNA polymerase II"/>
    <property type="evidence" value="ECO:0000266"/>
    <property type="project" value="ComplexPortal"/>
</dbReference>
<dbReference type="GO" id="GO:0006367">
    <property type="term" value="P:transcription initiation at RNA polymerase II promoter"/>
    <property type="evidence" value="ECO:0000266"/>
    <property type="project" value="ComplexPortal"/>
</dbReference>
<dbReference type="CDD" id="cd00240">
    <property type="entry name" value="TFIIFa"/>
    <property type="match status" value="1"/>
</dbReference>
<dbReference type="FunFam" id="1.10.10.10:FF:000290">
    <property type="entry name" value="General transcription factor IIF subunit 1"/>
    <property type="match status" value="1"/>
</dbReference>
<dbReference type="Gene3D" id="1.10.10.10">
    <property type="entry name" value="Winged helix-like DNA-binding domain superfamily/Winged helix DNA-binding domain"/>
    <property type="match status" value="1"/>
</dbReference>
<dbReference type="InterPro" id="IPR008851">
    <property type="entry name" value="TFIIF-alpha"/>
</dbReference>
<dbReference type="InterPro" id="IPR011039">
    <property type="entry name" value="TFIIF_interaction"/>
</dbReference>
<dbReference type="InterPro" id="IPR036388">
    <property type="entry name" value="WH-like_DNA-bd_sf"/>
</dbReference>
<dbReference type="InterPro" id="IPR036390">
    <property type="entry name" value="WH_DNA-bd_sf"/>
</dbReference>
<dbReference type="PANTHER" id="PTHR13011:SF0">
    <property type="entry name" value="GENERAL TRANSCRIPTION FACTOR IIF SUBUNIT 1"/>
    <property type="match status" value="1"/>
</dbReference>
<dbReference type="PANTHER" id="PTHR13011">
    <property type="entry name" value="TFIIF-ALPHA"/>
    <property type="match status" value="1"/>
</dbReference>
<dbReference type="Pfam" id="PF05793">
    <property type="entry name" value="TFIIF_alpha"/>
    <property type="match status" value="1"/>
</dbReference>
<dbReference type="SUPFAM" id="SSF50916">
    <property type="entry name" value="Rap30/74 interaction domains"/>
    <property type="match status" value="2"/>
</dbReference>
<dbReference type="SUPFAM" id="SSF46785">
    <property type="entry name" value="Winged helix' DNA-binding domain"/>
    <property type="match status" value="1"/>
</dbReference>
<comment type="function">
    <text evidence="1">TFIIF is a general transcription initiation factor that binds to RNA polymerase II and helps to recruit it to the initiation complex in collaboration with TFIIB. It promotes transcription elongation (By similarity).</text>
</comment>
<comment type="subunit">
    <text evidence="2">Heterodimer of an alpha and a beta subunit. Interacts with GTF2F2, CTDP1, TAF6/TAFII80 and URI1. Interacts with GTF2B (via C-terminus and preferentially via acetylated form); this interaction prevents binding of GTF2B to GTF2F2. Part of TBP-based Pol II pre-initiation complex (PIC), in which Pol II core assembles with general transcription factors and other specific initiation factors including GTF2E1, GTF2E2, GTF2F1, GTF2F2, TCEA1, ERCC2, ERCC3, GTF2H2, GTF2H3, GTF2H4, GTF2H5, GTF2A1, GTF2A2, GTF2B and TBP; this large multi-subunit PIC complex mediates DNA unwinding and targets Pol II core to the transcription start site where the first phosphodiester bond forms.</text>
</comment>
<comment type="subcellular location">
    <subcellularLocation>
        <location evidence="1">Nucleus</location>
    </subcellularLocation>
</comment>
<comment type="PTM">
    <text evidence="1">Phosphorylated on Ser and other residues by TAF1 and casein kinase II-like kinases.</text>
</comment>
<comment type="similarity">
    <text evidence="4">Belongs to the TFIIF alpha subunit family.</text>
</comment>
<accession>Q3THK3</accession>
<accession>Q8R5B7</accession>
<proteinExistence type="evidence at protein level"/>
<sequence length="508" mass="57241">MAALGSSSQNVTEYVVRVPKNTAKRYNIMAFNAADKVNFATWNQARLERDLSNKKIYQEEEMPESGAGSEFNRKLREEARRKKYGIVLKEFRPEDQPWLLRVNGKSGRKFKGIKKGGVTENTAYYIFTQCADGAFEAFPVQNWYNFTPLARHRTLTAEEAEEEWERRNKVLNHFSIMQQRRLKDQDQDEDEEEKEKRSRKKPSELRIHDLEDDLEMSSDASDASGEEGSRTSKAKKKAPVTKAGRKKKKKKGSDDEAFEDSDDGDFEGQEVDYMSDGSSSSPDETEGKPKVPQQEDGPKGVDEQSESSEESEEEKPPEEDKEEEEEKKAPTPQEKKRRKDSSDDSDSSEESDIDSETSSALFMAKKKTPPKRERKPSGGSSKGTSRPGTPSAEAASTSSTLRAAASKLEQGKRTSETPAAKRLRMDTGPQSLSGKSTPSSGDVQVTEDAVRRYLTRKPMTTKDLLKKFQTKKTGLSSEQTVNVLAQILKRLNPERKMIGDKMHFSLKE</sequence>
<keyword id="KW-0007">Acetylation</keyword>
<keyword id="KW-0238">DNA-binding</keyword>
<keyword id="KW-0539">Nucleus</keyword>
<keyword id="KW-0597">Phosphoprotein</keyword>
<keyword id="KW-1185">Reference proteome</keyword>
<keyword id="KW-0804">Transcription</keyword>
<keyword id="KW-0805">Transcription regulation</keyword>
<organism>
    <name type="scientific">Mus musculus</name>
    <name type="common">Mouse</name>
    <dbReference type="NCBI Taxonomy" id="10090"/>
    <lineage>
        <taxon>Eukaryota</taxon>
        <taxon>Metazoa</taxon>
        <taxon>Chordata</taxon>
        <taxon>Craniata</taxon>
        <taxon>Vertebrata</taxon>
        <taxon>Euteleostomi</taxon>
        <taxon>Mammalia</taxon>
        <taxon>Eutheria</taxon>
        <taxon>Euarchontoglires</taxon>
        <taxon>Glires</taxon>
        <taxon>Rodentia</taxon>
        <taxon>Myomorpha</taxon>
        <taxon>Muroidea</taxon>
        <taxon>Muridae</taxon>
        <taxon>Murinae</taxon>
        <taxon>Mus</taxon>
        <taxon>Mus</taxon>
    </lineage>
</organism>
<reference key="1">
    <citation type="journal article" date="2005" name="Science">
        <title>The transcriptional landscape of the mammalian genome.</title>
        <authorList>
            <person name="Carninci P."/>
            <person name="Kasukawa T."/>
            <person name="Katayama S."/>
            <person name="Gough J."/>
            <person name="Frith M.C."/>
            <person name="Maeda N."/>
            <person name="Oyama R."/>
            <person name="Ravasi T."/>
            <person name="Lenhard B."/>
            <person name="Wells C."/>
            <person name="Kodzius R."/>
            <person name="Shimokawa K."/>
            <person name="Bajic V.B."/>
            <person name="Brenner S.E."/>
            <person name="Batalov S."/>
            <person name="Forrest A.R."/>
            <person name="Zavolan M."/>
            <person name="Davis M.J."/>
            <person name="Wilming L.G."/>
            <person name="Aidinis V."/>
            <person name="Allen J.E."/>
            <person name="Ambesi-Impiombato A."/>
            <person name="Apweiler R."/>
            <person name="Aturaliya R.N."/>
            <person name="Bailey T.L."/>
            <person name="Bansal M."/>
            <person name="Baxter L."/>
            <person name="Beisel K.W."/>
            <person name="Bersano T."/>
            <person name="Bono H."/>
            <person name="Chalk A.M."/>
            <person name="Chiu K.P."/>
            <person name="Choudhary V."/>
            <person name="Christoffels A."/>
            <person name="Clutterbuck D.R."/>
            <person name="Crowe M.L."/>
            <person name="Dalla E."/>
            <person name="Dalrymple B.P."/>
            <person name="de Bono B."/>
            <person name="Della Gatta G."/>
            <person name="di Bernardo D."/>
            <person name="Down T."/>
            <person name="Engstrom P."/>
            <person name="Fagiolini M."/>
            <person name="Faulkner G."/>
            <person name="Fletcher C.F."/>
            <person name="Fukushima T."/>
            <person name="Furuno M."/>
            <person name="Futaki S."/>
            <person name="Gariboldi M."/>
            <person name="Georgii-Hemming P."/>
            <person name="Gingeras T.R."/>
            <person name="Gojobori T."/>
            <person name="Green R.E."/>
            <person name="Gustincich S."/>
            <person name="Harbers M."/>
            <person name="Hayashi Y."/>
            <person name="Hensch T.K."/>
            <person name="Hirokawa N."/>
            <person name="Hill D."/>
            <person name="Huminiecki L."/>
            <person name="Iacono M."/>
            <person name="Ikeo K."/>
            <person name="Iwama A."/>
            <person name="Ishikawa T."/>
            <person name="Jakt M."/>
            <person name="Kanapin A."/>
            <person name="Katoh M."/>
            <person name="Kawasawa Y."/>
            <person name="Kelso J."/>
            <person name="Kitamura H."/>
            <person name="Kitano H."/>
            <person name="Kollias G."/>
            <person name="Krishnan S.P."/>
            <person name="Kruger A."/>
            <person name="Kummerfeld S.K."/>
            <person name="Kurochkin I.V."/>
            <person name="Lareau L.F."/>
            <person name="Lazarevic D."/>
            <person name="Lipovich L."/>
            <person name="Liu J."/>
            <person name="Liuni S."/>
            <person name="McWilliam S."/>
            <person name="Madan Babu M."/>
            <person name="Madera M."/>
            <person name="Marchionni L."/>
            <person name="Matsuda H."/>
            <person name="Matsuzawa S."/>
            <person name="Miki H."/>
            <person name="Mignone F."/>
            <person name="Miyake S."/>
            <person name="Morris K."/>
            <person name="Mottagui-Tabar S."/>
            <person name="Mulder N."/>
            <person name="Nakano N."/>
            <person name="Nakauchi H."/>
            <person name="Ng P."/>
            <person name="Nilsson R."/>
            <person name="Nishiguchi S."/>
            <person name="Nishikawa S."/>
            <person name="Nori F."/>
            <person name="Ohara O."/>
            <person name="Okazaki Y."/>
            <person name="Orlando V."/>
            <person name="Pang K.C."/>
            <person name="Pavan W.J."/>
            <person name="Pavesi G."/>
            <person name="Pesole G."/>
            <person name="Petrovsky N."/>
            <person name="Piazza S."/>
            <person name="Reed J."/>
            <person name="Reid J.F."/>
            <person name="Ring B.Z."/>
            <person name="Ringwald M."/>
            <person name="Rost B."/>
            <person name="Ruan Y."/>
            <person name="Salzberg S.L."/>
            <person name="Sandelin A."/>
            <person name="Schneider C."/>
            <person name="Schoenbach C."/>
            <person name="Sekiguchi K."/>
            <person name="Semple C.A."/>
            <person name="Seno S."/>
            <person name="Sessa L."/>
            <person name="Sheng Y."/>
            <person name="Shibata Y."/>
            <person name="Shimada H."/>
            <person name="Shimada K."/>
            <person name="Silva D."/>
            <person name="Sinclair B."/>
            <person name="Sperling S."/>
            <person name="Stupka E."/>
            <person name="Sugiura K."/>
            <person name="Sultana R."/>
            <person name="Takenaka Y."/>
            <person name="Taki K."/>
            <person name="Tammoja K."/>
            <person name="Tan S.L."/>
            <person name="Tang S."/>
            <person name="Taylor M.S."/>
            <person name="Tegner J."/>
            <person name="Teichmann S.A."/>
            <person name="Ueda H.R."/>
            <person name="van Nimwegen E."/>
            <person name="Verardo R."/>
            <person name="Wei C.L."/>
            <person name="Yagi K."/>
            <person name="Yamanishi H."/>
            <person name="Zabarovsky E."/>
            <person name="Zhu S."/>
            <person name="Zimmer A."/>
            <person name="Hide W."/>
            <person name="Bult C."/>
            <person name="Grimmond S.M."/>
            <person name="Teasdale R.D."/>
            <person name="Liu E.T."/>
            <person name="Brusic V."/>
            <person name="Quackenbush J."/>
            <person name="Wahlestedt C."/>
            <person name="Mattick J.S."/>
            <person name="Hume D.A."/>
            <person name="Kai C."/>
            <person name="Sasaki D."/>
            <person name="Tomaru Y."/>
            <person name="Fukuda S."/>
            <person name="Kanamori-Katayama M."/>
            <person name="Suzuki M."/>
            <person name="Aoki J."/>
            <person name="Arakawa T."/>
            <person name="Iida J."/>
            <person name="Imamura K."/>
            <person name="Itoh M."/>
            <person name="Kato T."/>
            <person name="Kawaji H."/>
            <person name="Kawagashira N."/>
            <person name="Kawashima T."/>
            <person name="Kojima M."/>
            <person name="Kondo S."/>
            <person name="Konno H."/>
            <person name="Nakano K."/>
            <person name="Ninomiya N."/>
            <person name="Nishio T."/>
            <person name="Okada M."/>
            <person name="Plessy C."/>
            <person name="Shibata K."/>
            <person name="Shiraki T."/>
            <person name="Suzuki S."/>
            <person name="Tagami M."/>
            <person name="Waki K."/>
            <person name="Watahiki A."/>
            <person name="Okamura-Oho Y."/>
            <person name="Suzuki H."/>
            <person name="Kawai J."/>
            <person name="Hayashizaki Y."/>
        </authorList>
    </citation>
    <scope>NUCLEOTIDE SEQUENCE [LARGE SCALE MRNA]</scope>
    <source>
        <strain>DBA/2J</strain>
    </source>
</reference>
<reference key="2">
    <citation type="journal article" date="2007" name="J. Proteome Res.">
        <title>A differential phosphoproteomic analysis of retinoic acid-treated P19 cells.</title>
        <authorList>
            <person name="Smith J.C."/>
            <person name="Duchesne M.A."/>
            <person name="Tozzi P."/>
            <person name="Ethier M."/>
            <person name="Figeys D."/>
        </authorList>
    </citation>
    <scope>PHOSPHORYLATION [LARGE SCALE ANALYSIS] AT SER-221 AND SER-224</scope>
    <scope>IDENTIFICATION BY MASS SPECTROMETRY [LARGE SCALE ANALYSIS]</scope>
    <source>
        <tissue>Teratocarcinoma</tissue>
    </source>
</reference>
<reference key="3">
    <citation type="journal article" date="2007" name="Proc. Natl. Acad. Sci. U.S.A.">
        <title>Large-scale phosphorylation analysis of mouse liver.</title>
        <authorList>
            <person name="Villen J."/>
            <person name="Beausoleil S.A."/>
            <person name="Gerber S.A."/>
            <person name="Gygi S.P."/>
        </authorList>
    </citation>
    <scope>IDENTIFICATION BY MASS SPECTROMETRY [LARGE SCALE ANALYSIS]</scope>
    <source>
        <tissue>Liver</tissue>
    </source>
</reference>
<reference key="4">
    <citation type="journal article" date="2010" name="Cell">
        <title>A tissue-specific atlas of mouse protein phosphorylation and expression.</title>
        <authorList>
            <person name="Huttlin E.L."/>
            <person name="Jedrychowski M.P."/>
            <person name="Elias J.E."/>
            <person name="Goswami T."/>
            <person name="Rad R."/>
            <person name="Beausoleil S.A."/>
            <person name="Villen J."/>
            <person name="Haas W."/>
            <person name="Sowa M.E."/>
            <person name="Gygi S.P."/>
        </authorList>
    </citation>
    <scope>PHOSPHORYLATION [LARGE SCALE ANALYSIS] AT SER-217; SER-218; SER-221; SER-224; THR-389 AND SER-433</scope>
    <scope>IDENTIFICATION BY MASS SPECTROMETRY [LARGE SCALE ANALYSIS]</scope>
    <source>
        <tissue>Brain</tissue>
        <tissue>Brown adipose tissue</tissue>
        <tissue>Heart</tissue>
        <tissue>Kidney</tissue>
        <tissue>Liver</tissue>
        <tissue>Lung</tissue>
        <tissue>Pancreas</tissue>
        <tissue>Spleen</tissue>
        <tissue>Testis</tissue>
    </source>
</reference>
<reference key="5">
    <citation type="journal article" date="2013" name="Mol. Cell">
        <title>SIRT5-mediated lysine desuccinylation impacts diverse metabolic pathways.</title>
        <authorList>
            <person name="Park J."/>
            <person name="Chen Y."/>
            <person name="Tishkoff D.X."/>
            <person name="Peng C."/>
            <person name="Tan M."/>
            <person name="Dai L."/>
            <person name="Xie Z."/>
            <person name="Zhang Y."/>
            <person name="Zwaans B.M."/>
            <person name="Skinner M.E."/>
            <person name="Lombard D.B."/>
            <person name="Zhao Y."/>
        </authorList>
    </citation>
    <scope>ACETYLATION [LARGE SCALE ANALYSIS] AT LYS-407</scope>
    <scope>IDENTIFICATION BY MASS SPECTROMETRY [LARGE SCALE ANALYSIS]</scope>
    <source>
        <tissue>Embryonic fibroblast</tissue>
    </source>
</reference>